<sequence>MACKISPGANSASLPGHPNKVICERVRLQSLFPLLPSDQNTTVQEDAHFKAFFQSEDSPSPKRQRLSHSVFDYTSASPAPSPPMRPWEMTSNRQPPSVRPSQHHFSGERCNTPARNRRSPPVRRQRGRRDRLSRHNSISQDENYHHLPYAQQQAIEEPRAFHPPNVSPRLLHPAAHPPQQNAVMVDIHDQLHQGTVPVSYTVTTVAPHGIPLCTGQHIPACSTQQVPGCSVVFSGQHLPVCSVPPPMLQACSVQHLPVPYAAFPPLISSDPFLIHPPHLSPHHPPHLPPPGQFVPFQTQQSRSPLQRIENEVELLGEHLPVGGFTYPPSAHPPTLPPSAPLQFLTHDPLHQEVSFGVPYPPFMPRRLTGRSRYRSQQPIPPPPYHPSLLPYVLSMLPVPPAVGPTFSFELDVEDGEVENYEALLNLAERLGEAKPRGLTKADIEQLPSYRFNPNNHQSEQTLCVVCMCDFESRQLLRVLPCNHEFHAKCVDKWLKANRTCPICRADASEVHRDSE</sequence>
<gene>
    <name evidence="9" type="primary">RNF38</name>
</gene>
<protein>
    <recommendedName>
        <fullName evidence="8">E3 ubiquitin-protein ligase RNF38</fullName>
        <ecNumber>2.3.2.27</ecNumber>
    </recommendedName>
    <alternativeName>
        <fullName>RING finger protein 38</fullName>
    </alternativeName>
    <alternativeName>
        <fullName evidence="8">RING-type E3 ubiquitin transferase RNF38</fullName>
    </alternativeName>
</protein>
<dbReference type="EC" id="2.3.2.27"/>
<dbReference type="EMBL" id="AF394047">
    <property type="protein sequence ID" value="AAM73697.1"/>
    <property type="molecule type" value="mRNA"/>
</dbReference>
<dbReference type="EMBL" id="AL136817">
    <property type="protein sequence ID" value="CAB66751.3"/>
    <property type="molecule type" value="mRNA"/>
</dbReference>
<dbReference type="EMBL" id="AK024996">
    <property type="protein sequence ID" value="BAB15050.1"/>
    <property type="molecule type" value="mRNA"/>
</dbReference>
<dbReference type="EMBL" id="AK093480">
    <property type="protein sequence ID" value="BAG52726.1"/>
    <property type="molecule type" value="mRNA"/>
</dbReference>
<dbReference type="EMBL" id="AL161792">
    <property type="status" value="NOT_ANNOTATED_CDS"/>
    <property type="molecule type" value="Genomic_DNA"/>
</dbReference>
<dbReference type="EMBL" id="AL354935">
    <property type="status" value="NOT_ANNOTATED_CDS"/>
    <property type="molecule type" value="Genomic_DNA"/>
</dbReference>
<dbReference type="EMBL" id="CH471071">
    <property type="protein sequence ID" value="EAW58305.1"/>
    <property type="molecule type" value="Genomic_DNA"/>
</dbReference>
<dbReference type="EMBL" id="BC033786">
    <property type="protein sequence ID" value="AAH33786.2"/>
    <property type="molecule type" value="mRNA"/>
</dbReference>
<dbReference type="CCDS" id="CCDS6603.1">
    <molecule id="Q9H0F5-1"/>
</dbReference>
<dbReference type="CCDS" id="CCDS6604.1">
    <molecule id="Q9H0F5-2"/>
</dbReference>
<dbReference type="RefSeq" id="NP_073618.3">
    <molecule id="Q9H0F5-1"/>
    <property type="nucleotide sequence ID" value="NM_022781.4"/>
</dbReference>
<dbReference type="RefSeq" id="NP_919309.1">
    <molecule id="Q9H0F5-3"/>
    <property type="nucleotide sequence ID" value="NM_194328.3"/>
</dbReference>
<dbReference type="RefSeq" id="NP_919310.1">
    <molecule id="Q9H0F5-2"/>
    <property type="nucleotide sequence ID" value="NM_194329.3"/>
</dbReference>
<dbReference type="RefSeq" id="NP_919311.1">
    <molecule id="Q9H0F5-3"/>
    <property type="nucleotide sequence ID" value="NM_194330.3"/>
</dbReference>
<dbReference type="RefSeq" id="NP_919313.1">
    <molecule id="Q9H0F5-3"/>
    <property type="nucleotide sequence ID" value="NM_194332.3"/>
</dbReference>
<dbReference type="RefSeq" id="XP_005251423.1">
    <molecule id="Q9H0F5-3"/>
    <property type="nucleotide sequence ID" value="XM_005251366.4"/>
</dbReference>
<dbReference type="RefSeq" id="XP_005251424.1">
    <molecule id="Q9H0F5-3"/>
    <property type="nucleotide sequence ID" value="XM_005251367.4"/>
</dbReference>
<dbReference type="RefSeq" id="XP_005251425.1">
    <property type="nucleotide sequence ID" value="XM_005251368.3"/>
</dbReference>
<dbReference type="RefSeq" id="XP_006716784.1">
    <molecule id="Q9H0F5-3"/>
    <property type="nucleotide sequence ID" value="XM_006716721.4"/>
</dbReference>
<dbReference type="RefSeq" id="XP_011516014.1">
    <molecule id="Q9H0F5-3"/>
    <property type="nucleotide sequence ID" value="XM_011517712.3"/>
</dbReference>
<dbReference type="RefSeq" id="XP_011516015.1">
    <molecule id="Q9H0F5-3"/>
    <property type="nucleotide sequence ID" value="XM_011517713.3"/>
</dbReference>
<dbReference type="RefSeq" id="XP_016869784.1">
    <property type="nucleotide sequence ID" value="XM_017014295.1"/>
</dbReference>
<dbReference type="RefSeq" id="XP_047278754.1">
    <molecule id="Q9H0F5-3"/>
    <property type="nucleotide sequence ID" value="XM_047422798.1"/>
</dbReference>
<dbReference type="RefSeq" id="XP_047278755.1">
    <molecule id="Q9H0F5-3"/>
    <property type="nucleotide sequence ID" value="XM_047422799.1"/>
</dbReference>
<dbReference type="RefSeq" id="XP_047278756.1">
    <molecule id="Q9H0F5-3"/>
    <property type="nucleotide sequence ID" value="XM_047422800.1"/>
</dbReference>
<dbReference type="RefSeq" id="XP_047278757.1">
    <molecule id="Q9H0F5-3"/>
    <property type="nucleotide sequence ID" value="XM_047422801.1"/>
</dbReference>
<dbReference type="RefSeq" id="XP_047278758.1">
    <molecule id="Q9H0F5-3"/>
    <property type="nucleotide sequence ID" value="XM_047422802.1"/>
</dbReference>
<dbReference type="RefSeq" id="XP_047278759.1">
    <molecule id="Q9H0F5-3"/>
    <property type="nucleotide sequence ID" value="XM_047422803.1"/>
</dbReference>
<dbReference type="RefSeq" id="XP_047278760.1">
    <molecule id="Q9H0F5-3"/>
    <property type="nucleotide sequence ID" value="XM_047422804.1"/>
</dbReference>
<dbReference type="RefSeq" id="XP_047278761.1">
    <molecule id="Q9H0F5-3"/>
    <property type="nucleotide sequence ID" value="XM_047422805.1"/>
</dbReference>
<dbReference type="RefSeq" id="XP_047278762.1">
    <molecule id="Q9H0F5-3"/>
    <property type="nucleotide sequence ID" value="XM_047422806.1"/>
</dbReference>
<dbReference type="RefSeq" id="XP_054217981.1">
    <molecule id="Q9H0F5-3"/>
    <property type="nucleotide sequence ID" value="XM_054362006.1"/>
</dbReference>
<dbReference type="RefSeq" id="XP_054217982.1">
    <molecule id="Q9H0F5-3"/>
    <property type="nucleotide sequence ID" value="XM_054362007.1"/>
</dbReference>
<dbReference type="RefSeq" id="XP_054217983.1">
    <molecule id="Q9H0F5-3"/>
    <property type="nucleotide sequence ID" value="XM_054362008.1"/>
</dbReference>
<dbReference type="RefSeq" id="XP_054217984.1">
    <molecule id="Q9H0F5-3"/>
    <property type="nucleotide sequence ID" value="XM_054362009.1"/>
</dbReference>
<dbReference type="RefSeq" id="XP_054217985.1">
    <molecule id="Q9H0F5-3"/>
    <property type="nucleotide sequence ID" value="XM_054362010.1"/>
</dbReference>
<dbReference type="RefSeq" id="XP_054217986.1">
    <molecule id="Q9H0F5-3"/>
    <property type="nucleotide sequence ID" value="XM_054362011.1"/>
</dbReference>
<dbReference type="RefSeq" id="XP_054217987.1">
    <molecule id="Q9H0F5-3"/>
    <property type="nucleotide sequence ID" value="XM_054362012.1"/>
</dbReference>
<dbReference type="RefSeq" id="XP_054217988.1">
    <molecule id="Q9H0F5-3"/>
    <property type="nucleotide sequence ID" value="XM_054362013.1"/>
</dbReference>
<dbReference type="RefSeq" id="XP_054217989.1">
    <molecule id="Q9H0F5-3"/>
    <property type="nucleotide sequence ID" value="XM_054362014.1"/>
</dbReference>
<dbReference type="RefSeq" id="XP_054217990.1">
    <molecule id="Q9H0F5-3"/>
    <property type="nucleotide sequence ID" value="XM_054362015.1"/>
</dbReference>
<dbReference type="RefSeq" id="XP_054217991.1">
    <molecule id="Q9H0F5-3"/>
    <property type="nucleotide sequence ID" value="XM_054362016.1"/>
</dbReference>
<dbReference type="RefSeq" id="XP_054217994.1">
    <molecule id="Q9H0F5-3"/>
    <property type="nucleotide sequence ID" value="XM_054362019.1"/>
</dbReference>
<dbReference type="RefSeq" id="XP_054217995.1">
    <molecule id="Q9H0F5-3"/>
    <property type="nucleotide sequence ID" value="XM_054362020.1"/>
</dbReference>
<dbReference type="PDB" id="1X4J">
    <property type="method" value="NMR"/>
    <property type="chains" value="A=445-506"/>
</dbReference>
<dbReference type="PDB" id="4V3K">
    <property type="method" value="X-ray"/>
    <property type="resolution" value="2.04 A"/>
    <property type="chains" value="C/F=439-515"/>
</dbReference>
<dbReference type="PDB" id="4V3L">
    <property type="method" value="X-ray"/>
    <property type="resolution" value="1.53 A"/>
    <property type="chains" value="C=439-515"/>
</dbReference>
<dbReference type="PDB" id="7OJX">
    <property type="method" value="X-ray"/>
    <property type="resolution" value="2.40 A"/>
    <property type="chains" value="A=439-515"/>
</dbReference>
<dbReference type="PDBsum" id="1X4J"/>
<dbReference type="PDBsum" id="4V3K"/>
<dbReference type="PDBsum" id="4V3L"/>
<dbReference type="PDBsum" id="7OJX"/>
<dbReference type="SMR" id="Q9H0F5"/>
<dbReference type="BioGRID" id="127416">
    <property type="interactions" value="103"/>
</dbReference>
<dbReference type="FunCoup" id="Q9H0F5">
    <property type="interactions" value="3963"/>
</dbReference>
<dbReference type="IntAct" id="Q9H0F5">
    <property type="interactions" value="32"/>
</dbReference>
<dbReference type="MINT" id="Q9H0F5"/>
<dbReference type="STRING" id="9606.ENSP00000259605"/>
<dbReference type="GlyGen" id="Q9H0F5">
    <property type="glycosylation" value="1 site"/>
</dbReference>
<dbReference type="iPTMnet" id="Q9H0F5"/>
<dbReference type="PhosphoSitePlus" id="Q9H0F5"/>
<dbReference type="BioMuta" id="RNF38"/>
<dbReference type="DMDM" id="56749664"/>
<dbReference type="MassIVE" id="Q9H0F5"/>
<dbReference type="PaxDb" id="9606-ENSP00000259605"/>
<dbReference type="PeptideAtlas" id="Q9H0F5"/>
<dbReference type="ProteomicsDB" id="3188"/>
<dbReference type="ProteomicsDB" id="80269">
    <molecule id="Q9H0F5-1"/>
</dbReference>
<dbReference type="ProteomicsDB" id="80270">
    <molecule id="Q9H0F5-2"/>
</dbReference>
<dbReference type="ProteomicsDB" id="80271">
    <molecule id="Q9H0F5-3"/>
</dbReference>
<dbReference type="ProteomicsDB" id="81080"/>
<dbReference type="Antibodypedia" id="2887">
    <property type="antibodies" value="86 antibodies from 20 providers"/>
</dbReference>
<dbReference type="DNASU" id="152006"/>
<dbReference type="Ensembl" id="ENST00000259605.11">
    <molecule id="Q9H0F5-1"/>
    <property type="protein sequence ID" value="ENSP00000259605.6"/>
    <property type="gene ID" value="ENSG00000137075.18"/>
</dbReference>
<dbReference type="Ensembl" id="ENST00000350199.8">
    <molecule id="Q9H0F5-3"/>
    <property type="protein sequence ID" value="ENSP00000343947.4"/>
    <property type="gene ID" value="ENSG00000137075.18"/>
</dbReference>
<dbReference type="Ensembl" id="ENST00000353739.8">
    <molecule id="Q9H0F5-2"/>
    <property type="protein sequence ID" value="ENSP00000335239.5"/>
    <property type="gene ID" value="ENSG00000137075.18"/>
</dbReference>
<dbReference type="Ensembl" id="ENST00000357058.7">
    <molecule id="Q9H0F5-3"/>
    <property type="protein sequence ID" value="ENSP00000349566.3"/>
    <property type="gene ID" value="ENSG00000137075.18"/>
</dbReference>
<dbReference type="Ensembl" id="ENST00000377877.4">
    <molecule id="Q9H0F5-4"/>
    <property type="protein sequence ID" value="ENSP00000367109.3"/>
    <property type="gene ID" value="ENSG00000137075.18"/>
</dbReference>
<dbReference type="Ensembl" id="ENST00000377885.6">
    <molecule id="Q9H0F5-3"/>
    <property type="protein sequence ID" value="ENSP00000367117.2"/>
    <property type="gene ID" value="ENSG00000137075.18"/>
</dbReference>
<dbReference type="Ensembl" id="ENST00000611646.4">
    <molecule id="Q9H0F5-4"/>
    <property type="protein sequence ID" value="ENSP00000483536.1"/>
    <property type="gene ID" value="ENSG00000137075.18"/>
</dbReference>
<dbReference type="GeneID" id="152006"/>
<dbReference type="KEGG" id="hsa:152006"/>
<dbReference type="MANE-Select" id="ENST00000259605.11">
    <property type="protein sequence ID" value="ENSP00000259605.6"/>
    <property type="RefSeq nucleotide sequence ID" value="NM_022781.5"/>
    <property type="RefSeq protein sequence ID" value="NP_073618.3"/>
</dbReference>
<dbReference type="UCSC" id="uc003zzh.5">
    <molecule id="Q9H0F5-1"/>
    <property type="organism name" value="human"/>
</dbReference>
<dbReference type="AGR" id="HGNC:18052"/>
<dbReference type="CTD" id="152006"/>
<dbReference type="DisGeNET" id="152006"/>
<dbReference type="GeneCards" id="RNF38"/>
<dbReference type="HGNC" id="HGNC:18052">
    <property type="gene designation" value="RNF38"/>
</dbReference>
<dbReference type="HPA" id="ENSG00000137075">
    <property type="expression patterns" value="Low tissue specificity"/>
</dbReference>
<dbReference type="MIM" id="612488">
    <property type="type" value="gene"/>
</dbReference>
<dbReference type="neXtProt" id="NX_Q9H0F5"/>
<dbReference type="OpenTargets" id="ENSG00000137075"/>
<dbReference type="PharmGKB" id="PA34438"/>
<dbReference type="VEuPathDB" id="HostDB:ENSG00000137075"/>
<dbReference type="eggNOG" id="KOG0800">
    <property type="taxonomic scope" value="Eukaryota"/>
</dbReference>
<dbReference type="GeneTree" id="ENSGT00940000156228"/>
<dbReference type="HOGENOM" id="CLU_024578_0_0_1"/>
<dbReference type="InParanoid" id="Q9H0F5"/>
<dbReference type="OMA" id="IRPWESA"/>
<dbReference type="OrthoDB" id="8062037at2759"/>
<dbReference type="PAN-GO" id="Q9H0F5">
    <property type="GO annotations" value="2 GO annotations based on evolutionary models"/>
</dbReference>
<dbReference type="PhylomeDB" id="Q9H0F5"/>
<dbReference type="TreeFam" id="TF325756"/>
<dbReference type="PathwayCommons" id="Q9H0F5"/>
<dbReference type="SignaLink" id="Q9H0F5"/>
<dbReference type="SIGNOR" id="Q9H0F5"/>
<dbReference type="UniPathway" id="UPA00143"/>
<dbReference type="BioGRID-ORCS" id="152006">
    <property type="hits" value="10 hits in 1193 CRISPR screens"/>
</dbReference>
<dbReference type="ChiTaRS" id="RNF38">
    <property type="organism name" value="human"/>
</dbReference>
<dbReference type="EvolutionaryTrace" id="Q9H0F5"/>
<dbReference type="GeneWiki" id="RNF38"/>
<dbReference type="GenomeRNAi" id="152006"/>
<dbReference type="Pharos" id="Q9H0F5">
    <property type="development level" value="Tbio"/>
</dbReference>
<dbReference type="PRO" id="PR:Q9H0F5"/>
<dbReference type="Proteomes" id="UP000005640">
    <property type="component" value="Chromosome 9"/>
</dbReference>
<dbReference type="RNAct" id="Q9H0F5">
    <property type="molecule type" value="protein"/>
</dbReference>
<dbReference type="Bgee" id="ENSG00000137075">
    <property type="expression patterns" value="Expressed in sperm and 209 other cell types or tissues"/>
</dbReference>
<dbReference type="GO" id="GO:0005654">
    <property type="term" value="C:nucleoplasm"/>
    <property type="evidence" value="ECO:0000314"/>
    <property type="project" value="HPA"/>
</dbReference>
<dbReference type="GO" id="GO:0005634">
    <property type="term" value="C:nucleus"/>
    <property type="evidence" value="ECO:0000314"/>
    <property type="project" value="FlyBase"/>
</dbReference>
<dbReference type="GO" id="GO:0036126">
    <property type="term" value="C:sperm flagellum"/>
    <property type="evidence" value="ECO:0007669"/>
    <property type="project" value="Ensembl"/>
</dbReference>
<dbReference type="GO" id="GO:0061630">
    <property type="term" value="F:ubiquitin protein ligase activity"/>
    <property type="evidence" value="ECO:0000314"/>
    <property type="project" value="FlyBase"/>
</dbReference>
<dbReference type="GO" id="GO:0008270">
    <property type="term" value="F:zinc ion binding"/>
    <property type="evidence" value="ECO:0007669"/>
    <property type="project" value="UniProtKB-KW"/>
</dbReference>
<dbReference type="GO" id="GO:0008584">
    <property type="term" value="P:male gonad development"/>
    <property type="evidence" value="ECO:0007669"/>
    <property type="project" value="Ensembl"/>
</dbReference>
<dbReference type="GO" id="GO:0016567">
    <property type="term" value="P:protein ubiquitination"/>
    <property type="evidence" value="ECO:0000314"/>
    <property type="project" value="FlyBase"/>
</dbReference>
<dbReference type="CDD" id="cd16679">
    <property type="entry name" value="RING-H2_RNF38"/>
    <property type="match status" value="1"/>
</dbReference>
<dbReference type="FunFam" id="3.30.40.10:FF:000024">
    <property type="entry name" value="RING finger protein 44 isoform X1"/>
    <property type="match status" value="1"/>
</dbReference>
<dbReference type="Gene3D" id="3.30.40.10">
    <property type="entry name" value="Zinc/RING finger domain, C3HC4 (zinc finger)"/>
    <property type="match status" value="1"/>
</dbReference>
<dbReference type="InterPro" id="IPR001841">
    <property type="entry name" value="Znf_RING"/>
</dbReference>
<dbReference type="InterPro" id="IPR013083">
    <property type="entry name" value="Znf_RING/FYVE/PHD"/>
</dbReference>
<dbReference type="PANTHER" id="PTHR46171:SF1">
    <property type="entry name" value="E3 UBIQUITIN-PROTEIN LIGASE RNF38"/>
    <property type="match status" value="1"/>
</dbReference>
<dbReference type="PANTHER" id="PTHR46171">
    <property type="entry name" value="GH10160P"/>
    <property type="match status" value="1"/>
</dbReference>
<dbReference type="Pfam" id="PF13639">
    <property type="entry name" value="zf-RING_2"/>
    <property type="match status" value="1"/>
</dbReference>
<dbReference type="SMART" id="SM00184">
    <property type="entry name" value="RING"/>
    <property type="match status" value="1"/>
</dbReference>
<dbReference type="SUPFAM" id="SSF57850">
    <property type="entry name" value="RING/U-box"/>
    <property type="match status" value="1"/>
</dbReference>
<dbReference type="PROSITE" id="PS50089">
    <property type="entry name" value="ZF_RING_2"/>
    <property type="match status" value="1"/>
</dbReference>
<accession>Q9H0F5</accession>
<accession>A6PVP9</accession>
<accession>B1AM81</accession>
<accession>B1AM82</accession>
<accession>B3KSG4</accession>
<accession>E7EVL3</accession>
<accession>Q7LB33</accession>
<accession>Q8N0Y0</accession>
<accession>Q9H748</accession>
<reference key="1">
    <citation type="journal article" date="2002" name="Biochem. Biophys. Res. Commun.">
        <title>Cloning and characterization of a novel human gene RNF38 encoding a conserved putative protein with a RING finger domain.</title>
        <authorList>
            <person name="Eisenberg I."/>
            <person name="Hochner H."/>
            <person name="Levi T."/>
            <person name="Yelin R."/>
            <person name="Kahan T."/>
            <person name="Mitrani-Rosenbaum S."/>
        </authorList>
    </citation>
    <scope>NUCLEOTIDE SEQUENCE [MRNA] (ISOFORM 3)</scope>
    <scope>TISSUE SPECIFICITY</scope>
    <scope>VARIANT THR-206</scope>
</reference>
<reference key="2">
    <citation type="journal article" date="2001" name="Genome Res.">
        <title>Towards a catalog of human genes and proteins: sequencing and analysis of 500 novel complete protein coding human cDNAs.</title>
        <authorList>
            <person name="Wiemann S."/>
            <person name="Weil B."/>
            <person name="Wellenreuther R."/>
            <person name="Gassenhuber J."/>
            <person name="Glassl S."/>
            <person name="Ansorge W."/>
            <person name="Boecher M."/>
            <person name="Bloecker H."/>
            <person name="Bauersachs S."/>
            <person name="Blum H."/>
            <person name="Lauber J."/>
            <person name="Duesterhoeft A."/>
            <person name="Beyer A."/>
            <person name="Koehrer K."/>
            <person name="Strack N."/>
            <person name="Mewes H.-W."/>
            <person name="Ottenwaelder B."/>
            <person name="Obermaier B."/>
            <person name="Tampe J."/>
            <person name="Heubner D."/>
            <person name="Wambutt R."/>
            <person name="Korn B."/>
            <person name="Klein M."/>
            <person name="Poustka A."/>
        </authorList>
    </citation>
    <scope>NUCLEOTIDE SEQUENCE [LARGE SCALE MRNA] (ISOFORM 1)</scope>
    <source>
        <tissue>Testis</tissue>
    </source>
</reference>
<reference key="3">
    <citation type="journal article" date="2004" name="Nat. Genet.">
        <title>Complete sequencing and characterization of 21,243 full-length human cDNAs.</title>
        <authorList>
            <person name="Ota T."/>
            <person name="Suzuki Y."/>
            <person name="Nishikawa T."/>
            <person name="Otsuki T."/>
            <person name="Sugiyama T."/>
            <person name="Irie R."/>
            <person name="Wakamatsu A."/>
            <person name="Hayashi K."/>
            <person name="Sato H."/>
            <person name="Nagai K."/>
            <person name="Kimura K."/>
            <person name="Makita H."/>
            <person name="Sekine M."/>
            <person name="Obayashi M."/>
            <person name="Nishi T."/>
            <person name="Shibahara T."/>
            <person name="Tanaka T."/>
            <person name="Ishii S."/>
            <person name="Yamamoto J."/>
            <person name="Saito K."/>
            <person name="Kawai Y."/>
            <person name="Isono Y."/>
            <person name="Nakamura Y."/>
            <person name="Nagahari K."/>
            <person name="Murakami K."/>
            <person name="Yasuda T."/>
            <person name="Iwayanagi T."/>
            <person name="Wagatsuma M."/>
            <person name="Shiratori A."/>
            <person name="Sudo H."/>
            <person name="Hosoiri T."/>
            <person name="Kaku Y."/>
            <person name="Kodaira H."/>
            <person name="Kondo H."/>
            <person name="Sugawara M."/>
            <person name="Takahashi M."/>
            <person name="Kanda K."/>
            <person name="Yokoi T."/>
            <person name="Furuya T."/>
            <person name="Kikkawa E."/>
            <person name="Omura Y."/>
            <person name="Abe K."/>
            <person name="Kamihara K."/>
            <person name="Katsuta N."/>
            <person name="Sato K."/>
            <person name="Tanikawa M."/>
            <person name="Yamazaki M."/>
            <person name="Ninomiya K."/>
            <person name="Ishibashi T."/>
            <person name="Yamashita H."/>
            <person name="Murakawa K."/>
            <person name="Fujimori K."/>
            <person name="Tanai H."/>
            <person name="Kimata M."/>
            <person name="Watanabe M."/>
            <person name="Hiraoka S."/>
            <person name="Chiba Y."/>
            <person name="Ishida S."/>
            <person name="Ono Y."/>
            <person name="Takiguchi S."/>
            <person name="Watanabe S."/>
            <person name="Yosida M."/>
            <person name="Hotuta T."/>
            <person name="Kusano J."/>
            <person name="Kanehori K."/>
            <person name="Takahashi-Fujii A."/>
            <person name="Hara H."/>
            <person name="Tanase T.-O."/>
            <person name="Nomura Y."/>
            <person name="Togiya S."/>
            <person name="Komai F."/>
            <person name="Hara R."/>
            <person name="Takeuchi K."/>
            <person name="Arita M."/>
            <person name="Imose N."/>
            <person name="Musashino K."/>
            <person name="Yuuki H."/>
            <person name="Oshima A."/>
            <person name="Sasaki N."/>
            <person name="Aotsuka S."/>
            <person name="Yoshikawa Y."/>
            <person name="Matsunawa H."/>
            <person name="Ichihara T."/>
            <person name="Shiohata N."/>
            <person name="Sano S."/>
            <person name="Moriya S."/>
            <person name="Momiyama H."/>
            <person name="Satoh N."/>
            <person name="Takami S."/>
            <person name="Terashima Y."/>
            <person name="Suzuki O."/>
            <person name="Nakagawa S."/>
            <person name="Senoh A."/>
            <person name="Mizoguchi H."/>
            <person name="Goto Y."/>
            <person name="Shimizu F."/>
            <person name="Wakebe H."/>
            <person name="Hishigaki H."/>
            <person name="Watanabe T."/>
            <person name="Sugiyama A."/>
            <person name="Takemoto M."/>
            <person name="Kawakami B."/>
            <person name="Yamazaki M."/>
            <person name="Watanabe K."/>
            <person name="Kumagai A."/>
            <person name="Itakura S."/>
            <person name="Fukuzumi Y."/>
            <person name="Fujimori Y."/>
            <person name="Komiyama M."/>
            <person name="Tashiro H."/>
            <person name="Tanigami A."/>
            <person name="Fujiwara T."/>
            <person name="Ono T."/>
            <person name="Yamada K."/>
            <person name="Fujii Y."/>
            <person name="Ozaki K."/>
            <person name="Hirao M."/>
            <person name="Ohmori Y."/>
            <person name="Kawabata A."/>
            <person name="Hikiji T."/>
            <person name="Kobatake N."/>
            <person name="Inagaki H."/>
            <person name="Ikema Y."/>
            <person name="Okamoto S."/>
            <person name="Okitani R."/>
            <person name="Kawakami T."/>
            <person name="Noguchi S."/>
            <person name="Itoh T."/>
            <person name="Shigeta K."/>
            <person name="Senba T."/>
            <person name="Matsumura K."/>
            <person name="Nakajima Y."/>
            <person name="Mizuno T."/>
            <person name="Morinaga M."/>
            <person name="Sasaki M."/>
            <person name="Togashi T."/>
            <person name="Oyama M."/>
            <person name="Hata H."/>
            <person name="Watanabe M."/>
            <person name="Komatsu T."/>
            <person name="Mizushima-Sugano J."/>
            <person name="Satoh T."/>
            <person name="Shirai Y."/>
            <person name="Takahashi Y."/>
            <person name="Nakagawa K."/>
            <person name="Okumura K."/>
            <person name="Nagase T."/>
            <person name="Nomura N."/>
            <person name="Kikuchi H."/>
            <person name="Masuho Y."/>
            <person name="Yamashita R."/>
            <person name="Nakai K."/>
            <person name="Yada T."/>
            <person name="Nakamura Y."/>
            <person name="Ohara O."/>
            <person name="Isogai T."/>
            <person name="Sugano S."/>
        </authorList>
    </citation>
    <scope>NUCLEOTIDE SEQUENCE [LARGE SCALE MRNA] (ISOFORMS 4 AND 5)</scope>
    <source>
        <tissue>Colon</tissue>
        <tissue>Testis</tissue>
    </source>
</reference>
<reference key="4">
    <citation type="journal article" date="2004" name="Nature">
        <title>DNA sequence and analysis of human chromosome 9.</title>
        <authorList>
            <person name="Humphray S.J."/>
            <person name="Oliver K."/>
            <person name="Hunt A.R."/>
            <person name="Plumb R.W."/>
            <person name="Loveland J.E."/>
            <person name="Howe K.L."/>
            <person name="Andrews T.D."/>
            <person name="Searle S."/>
            <person name="Hunt S.E."/>
            <person name="Scott C.E."/>
            <person name="Jones M.C."/>
            <person name="Ainscough R."/>
            <person name="Almeida J.P."/>
            <person name="Ambrose K.D."/>
            <person name="Ashwell R.I.S."/>
            <person name="Babbage A.K."/>
            <person name="Babbage S."/>
            <person name="Bagguley C.L."/>
            <person name="Bailey J."/>
            <person name="Banerjee R."/>
            <person name="Barker D.J."/>
            <person name="Barlow K.F."/>
            <person name="Bates K."/>
            <person name="Beasley H."/>
            <person name="Beasley O."/>
            <person name="Bird C.P."/>
            <person name="Bray-Allen S."/>
            <person name="Brown A.J."/>
            <person name="Brown J.Y."/>
            <person name="Burford D."/>
            <person name="Burrill W."/>
            <person name="Burton J."/>
            <person name="Carder C."/>
            <person name="Carter N.P."/>
            <person name="Chapman J.C."/>
            <person name="Chen Y."/>
            <person name="Clarke G."/>
            <person name="Clark S.Y."/>
            <person name="Clee C.M."/>
            <person name="Clegg S."/>
            <person name="Collier R.E."/>
            <person name="Corby N."/>
            <person name="Crosier M."/>
            <person name="Cummings A.T."/>
            <person name="Davies J."/>
            <person name="Dhami P."/>
            <person name="Dunn M."/>
            <person name="Dutta I."/>
            <person name="Dyer L.W."/>
            <person name="Earthrowl M.E."/>
            <person name="Faulkner L."/>
            <person name="Fleming C.J."/>
            <person name="Frankish A."/>
            <person name="Frankland J.A."/>
            <person name="French L."/>
            <person name="Fricker D.G."/>
            <person name="Garner P."/>
            <person name="Garnett J."/>
            <person name="Ghori J."/>
            <person name="Gilbert J.G.R."/>
            <person name="Glison C."/>
            <person name="Grafham D.V."/>
            <person name="Gribble S."/>
            <person name="Griffiths C."/>
            <person name="Griffiths-Jones S."/>
            <person name="Grocock R."/>
            <person name="Guy J."/>
            <person name="Hall R.E."/>
            <person name="Hammond S."/>
            <person name="Harley J.L."/>
            <person name="Harrison E.S.I."/>
            <person name="Hart E.A."/>
            <person name="Heath P.D."/>
            <person name="Henderson C.D."/>
            <person name="Hopkins B.L."/>
            <person name="Howard P.J."/>
            <person name="Howden P.J."/>
            <person name="Huckle E."/>
            <person name="Johnson C."/>
            <person name="Johnson D."/>
            <person name="Joy A.A."/>
            <person name="Kay M."/>
            <person name="Keenan S."/>
            <person name="Kershaw J.K."/>
            <person name="Kimberley A.M."/>
            <person name="King A."/>
            <person name="Knights A."/>
            <person name="Laird G.K."/>
            <person name="Langford C."/>
            <person name="Lawlor S."/>
            <person name="Leongamornlert D.A."/>
            <person name="Leversha M."/>
            <person name="Lloyd C."/>
            <person name="Lloyd D.M."/>
            <person name="Lovell J."/>
            <person name="Martin S."/>
            <person name="Mashreghi-Mohammadi M."/>
            <person name="Matthews L."/>
            <person name="McLaren S."/>
            <person name="McLay K.E."/>
            <person name="McMurray A."/>
            <person name="Milne S."/>
            <person name="Nickerson T."/>
            <person name="Nisbett J."/>
            <person name="Nordsiek G."/>
            <person name="Pearce A.V."/>
            <person name="Peck A.I."/>
            <person name="Porter K.M."/>
            <person name="Pandian R."/>
            <person name="Pelan S."/>
            <person name="Phillimore B."/>
            <person name="Povey S."/>
            <person name="Ramsey Y."/>
            <person name="Rand V."/>
            <person name="Scharfe M."/>
            <person name="Sehra H.K."/>
            <person name="Shownkeen R."/>
            <person name="Sims S.K."/>
            <person name="Skuce C.D."/>
            <person name="Smith M."/>
            <person name="Steward C.A."/>
            <person name="Swarbreck D."/>
            <person name="Sycamore N."/>
            <person name="Tester J."/>
            <person name="Thorpe A."/>
            <person name="Tracey A."/>
            <person name="Tromans A."/>
            <person name="Thomas D.W."/>
            <person name="Wall M."/>
            <person name="Wallis J.M."/>
            <person name="West A.P."/>
            <person name="Whitehead S.L."/>
            <person name="Willey D.L."/>
            <person name="Williams S.A."/>
            <person name="Wilming L."/>
            <person name="Wray P.W."/>
            <person name="Young L."/>
            <person name="Ashurst J.L."/>
            <person name="Coulson A."/>
            <person name="Blocker H."/>
            <person name="Durbin R.M."/>
            <person name="Sulston J.E."/>
            <person name="Hubbard T."/>
            <person name="Jackson M.J."/>
            <person name="Bentley D.R."/>
            <person name="Beck S."/>
            <person name="Rogers J."/>
            <person name="Dunham I."/>
        </authorList>
    </citation>
    <scope>NUCLEOTIDE SEQUENCE [LARGE SCALE GENOMIC DNA]</scope>
</reference>
<reference key="5">
    <citation type="submission" date="2005-09" db="EMBL/GenBank/DDBJ databases">
        <authorList>
            <person name="Mural R.J."/>
            <person name="Istrail S."/>
            <person name="Sutton G.G."/>
            <person name="Florea L."/>
            <person name="Halpern A.L."/>
            <person name="Mobarry C.M."/>
            <person name="Lippert R."/>
            <person name="Walenz B."/>
            <person name="Shatkay H."/>
            <person name="Dew I."/>
            <person name="Miller J.R."/>
            <person name="Flanigan M.J."/>
            <person name="Edwards N.J."/>
            <person name="Bolanos R."/>
            <person name="Fasulo D."/>
            <person name="Halldorsson B.V."/>
            <person name="Hannenhalli S."/>
            <person name="Turner R."/>
            <person name="Yooseph S."/>
            <person name="Lu F."/>
            <person name="Nusskern D.R."/>
            <person name="Shue B.C."/>
            <person name="Zheng X.H."/>
            <person name="Zhong F."/>
            <person name="Delcher A.L."/>
            <person name="Huson D.H."/>
            <person name="Kravitz S.A."/>
            <person name="Mouchard L."/>
            <person name="Reinert K."/>
            <person name="Remington K.A."/>
            <person name="Clark A.G."/>
            <person name="Waterman M.S."/>
            <person name="Eichler E.E."/>
            <person name="Adams M.D."/>
            <person name="Hunkapiller M.W."/>
            <person name="Myers E.W."/>
            <person name="Venter J.C."/>
        </authorList>
    </citation>
    <scope>NUCLEOTIDE SEQUENCE [LARGE SCALE GENOMIC DNA]</scope>
</reference>
<reference key="6">
    <citation type="journal article" date="2004" name="Genome Res.">
        <title>The status, quality, and expansion of the NIH full-length cDNA project: the Mammalian Gene Collection (MGC).</title>
        <authorList>
            <consortium name="The MGC Project Team"/>
        </authorList>
    </citation>
    <scope>NUCLEOTIDE SEQUENCE [LARGE SCALE MRNA] (ISOFORM 2)</scope>
    <source>
        <tissue>Brain</tissue>
    </source>
</reference>
<reference key="7">
    <citation type="journal article" date="2013" name="Biochem. Biophys. Res. Commun.">
        <title>RNF38 encodes a nuclear ubiquitin protein ligase that modifies p53.</title>
        <authorList>
            <person name="Sheren J.E."/>
            <person name="Kassenbrock C.K."/>
        </authorList>
    </citation>
    <scope>FUNCTION</scope>
    <scope>NUCLEAR LOCALIZATION SIGNAL</scope>
    <scope>SUBCELLULAR LOCATION</scope>
</reference>
<reference key="8">
    <citation type="submission" date="2005-11" db="PDB data bank">
        <title>Solution structure of RING finger in RING finger protein 38.</title>
        <authorList>
            <consortium name="RIKEN structural genomics initiative (RSGI)"/>
        </authorList>
    </citation>
    <scope>STRUCTURE BY NMR OF 445-506</scope>
</reference>
<evidence type="ECO:0000255" key="1">
    <source>
        <dbReference type="PROSITE-ProRule" id="PRU00175"/>
    </source>
</evidence>
<evidence type="ECO:0000256" key="2">
    <source>
        <dbReference type="SAM" id="MobiDB-lite"/>
    </source>
</evidence>
<evidence type="ECO:0000269" key="3">
    <source>
    </source>
</evidence>
<evidence type="ECO:0000269" key="4">
    <source>
    </source>
</evidence>
<evidence type="ECO:0000303" key="5">
    <source>
    </source>
</evidence>
<evidence type="ECO:0000303" key="6">
    <source>
    </source>
</evidence>
<evidence type="ECO:0000303" key="7">
    <source>
    </source>
</evidence>
<evidence type="ECO:0000305" key="8"/>
<evidence type="ECO:0000312" key="9">
    <source>
        <dbReference type="HGNC" id="HGNC:18052"/>
    </source>
</evidence>
<evidence type="ECO:0007829" key="10">
    <source>
        <dbReference type="PDB" id="1X4J"/>
    </source>
</evidence>
<evidence type="ECO:0007829" key="11">
    <source>
        <dbReference type="PDB" id="4V3K"/>
    </source>
</evidence>
<evidence type="ECO:0007829" key="12">
    <source>
        <dbReference type="PDB" id="4V3L"/>
    </source>
</evidence>
<comment type="function">
    <text evidence="4">Acts as an E3 ubiquitin-protein ligase able to ubiquitinate p53/TP53 which promotes its relocalization to discrete foci associated with PML nuclear bodies. Exhibits preference for UBE2D2 as a E2 enzyme.</text>
</comment>
<comment type="catalytic activity">
    <reaction>
        <text>S-ubiquitinyl-[E2 ubiquitin-conjugating enzyme]-L-cysteine + [acceptor protein]-L-lysine = [E2 ubiquitin-conjugating enzyme]-L-cysteine + N(6)-ubiquitinyl-[acceptor protein]-L-lysine.</text>
        <dbReference type="EC" id="2.3.2.27"/>
    </reaction>
</comment>
<comment type="pathway">
    <text>Protein modification; protein ubiquitination.</text>
</comment>
<comment type="interaction">
    <interactant intactId="EBI-2341200">
        <id>Q9H0F5</id>
    </interactant>
    <interactant intactId="EBI-3867333">
        <id>A8MQ03</id>
        <label>CYSRT1</label>
    </interactant>
    <organismsDiffer>false</organismsDiffer>
    <experiments>3</experiments>
</comment>
<comment type="interaction">
    <interactant intactId="EBI-2341200">
        <id>Q9H0F5</id>
    </interactant>
    <interactant intactId="EBI-10981970">
        <id>Q5T749</id>
        <label>KPRP</label>
    </interactant>
    <organismsDiffer>false</organismsDiffer>
    <experiments>3</experiments>
</comment>
<comment type="interaction">
    <interactant intactId="EBI-2341200">
        <id>Q9H0F5</id>
    </interactant>
    <interactant intactId="EBI-10171774">
        <id>P60410</id>
        <label>KRTAP10-8</label>
    </interactant>
    <organismsDiffer>false</organismsDiffer>
    <experiments>3</experiments>
</comment>
<comment type="interaction">
    <interactant intactId="EBI-2341200">
        <id>Q9H0F5</id>
    </interactant>
    <interactant intactId="EBI-1052037">
        <id>Q8IUC1</id>
        <label>KRTAP11-1</label>
    </interactant>
    <organismsDiffer>false</organismsDiffer>
    <experiments>3</experiments>
</comment>
<comment type="interaction">
    <interactant intactId="EBI-2341200">
        <id>Q9H0F5</id>
    </interactant>
    <interactant intactId="EBI-1048945">
        <id>Q3LI72</id>
        <label>KRTAP19-5</label>
    </interactant>
    <organismsDiffer>false</organismsDiffer>
    <experiments>3</experiments>
</comment>
<comment type="interaction">
    <interactant intactId="EBI-2341200">
        <id>Q9H0F5</id>
    </interactant>
    <interactant intactId="EBI-18395721">
        <id>Q3LI59</id>
        <label>KRTAP21-2</label>
    </interactant>
    <organismsDiffer>false</organismsDiffer>
    <experiments>3</experiments>
</comment>
<comment type="interaction">
    <interactant intactId="EBI-2341200">
        <id>Q9H0F5</id>
    </interactant>
    <interactant intactId="EBI-11962084">
        <id>Q3LI66</id>
        <label>KRTAP6-2</label>
    </interactant>
    <organismsDiffer>false</organismsDiffer>
    <experiments>3</experiments>
</comment>
<comment type="interaction">
    <interactant intactId="EBI-2341200">
        <id>Q9H0F5</id>
    </interactant>
    <interactant intactId="EBI-18394498">
        <id>Q8IUC3</id>
        <label>KRTAP7-1</label>
    </interactant>
    <organismsDiffer>false</organismsDiffer>
    <experiments>3</experiments>
</comment>
<comment type="interaction">
    <interactant intactId="EBI-2341200">
        <id>Q9H0F5</id>
    </interactant>
    <interactant intactId="EBI-10261141">
        <id>Q8IUC2</id>
        <label>KRTAP8-1</label>
    </interactant>
    <organismsDiffer>false</organismsDiffer>
    <experiments>3</experiments>
</comment>
<comment type="interaction">
    <interactant intactId="EBI-2341200">
        <id>Q9H0F5</id>
    </interactant>
    <interactant intactId="EBI-9088686">
        <id>Q14847-2</id>
        <label>LASP1</label>
    </interactant>
    <organismsDiffer>false</organismsDiffer>
    <experiments>3</experiments>
</comment>
<comment type="interaction">
    <interactant intactId="EBI-2341200">
        <id>Q9H0F5</id>
    </interactant>
    <interactant intactId="EBI-12813389">
        <id>Q8TDS5</id>
        <label>OXER1</label>
    </interactant>
    <organismsDiffer>false</organismsDiffer>
    <experiments>3</experiments>
</comment>
<comment type="interaction">
    <interactant intactId="EBI-2341200">
        <id>Q9H0F5</id>
    </interactant>
    <interactant intactId="EBI-751555">
        <id>Q9H0X6</id>
        <label>RNF208</label>
    </interactant>
    <organismsDiffer>false</organismsDiffer>
    <experiments>3</experiments>
</comment>
<comment type="interaction">
    <interactant intactId="EBI-25866807">
        <id>Q9H0F5-2</id>
    </interactant>
    <interactant intactId="EBI-930964">
        <id>P54253</id>
        <label>ATXN1</label>
    </interactant>
    <organismsDiffer>false</organismsDiffer>
    <experiments>6</experiments>
</comment>
<comment type="interaction">
    <interactant intactId="EBI-25866807">
        <id>Q9H0F5-2</id>
    </interactant>
    <interactant intactId="EBI-355710">
        <id>P48643</id>
        <label>CCT5</label>
    </interactant>
    <organismsDiffer>false</organismsDiffer>
    <experiments>3</experiments>
</comment>
<comment type="interaction">
    <interactant intactId="EBI-25866807">
        <id>Q9H0F5-2</id>
    </interactant>
    <interactant intactId="EBI-466029">
        <id>P42858</id>
        <label>HTT</label>
    </interactant>
    <organismsDiffer>false</organismsDiffer>
    <experiments>21</experiments>
</comment>
<comment type="interaction">
    <interactant intactId="EBI-25866807">
        <id>Q9H0F5-2</id>
    </interactant>
    <interactant intactId="EBI-720609">
        <id>O76024</id>
        <label>WFS1</label>
    </interactant>
    <organismsDiffer>false</organismsDiffer>
    <experiments>3</experiments>
</comment>
<comment type="subcellular location">
    <subcellularLocation>
        <location evidence="4">Nucleus</location>
    </subcellularLocation>
</comment>
<comment type="alternative products">
    <event type="alternative splicing"/>
    <isoform>
        <id>Q9H0F5-1</id>
        <name>1</name>
        <sequence type="displayed"/>
    </isoform>
    <isoform>
        <id>Q9H0F5-2</id>
        <name>2</name>
        <sequence type="described" ref="VSP_012243"/>
    </isoform>
    <isoform>
        <id>Q9H0F5-3</id>
        <name>3</name>
        <sequence type="described" ref="VSP_037337"/>
    </isoform>
    <isoform>
        <id>Q9H0F5-4</id>
        <name>4</name>
        <sequence type="described" ref="VSP_053846 VSP_053847"/>
    </isoform>
    <isoform>
        <id>Q9H0F5-5</id>
        <name>5</name>
        <sequence type="described" ref="VSP_053845"/>
    </isoform>
</comment>
<comment type="tissue specificity">
    <text evidence="3">Widely expressed with highest levels in testis.</text>
</comment>
<feature type="chain" id="PRO_0000056078" description="E3 ubiquitin-protein ligase RNF38">
    <location>
        <begin position="1"/>
        <end position="515"/>
    </location>
</feature>
<feature type="zinc finger region" description="RING-type" evidence="1">
    <location>
        <begin position="463"/>
        <end position="504"/>
    </location>
</feature>
<feature type="region of interest" description="Disordered" evidence="2">
    <location>
        <begin position="73"/>
        <end position="141"/>
    </location>
</feature>
<feature type="short sequence motif" description="Bipartite nuclear localization signal 1">
    <location>
        <begin position="57"/>
        <end position="71"/>
    </location>
</feature>
<feature type="short sequence motif" description="Bipartite nuclear localization signal 2">
    <location>
        <begin position="115"/>
        <end position="131"/>
    </location>
</feature>
<feature type="compositionally biased region" description="Polar residues" evidence="2">
    <location>
        <begin position="89"/>
        <end position="104"/>
    </location>
</feature>
<feature type="compositionally biased region" description="Basic residues" evidence="2">
    <location>
        <begin position="115"/>
        <end position="134"/>
    </location>
</feature>
<feature type="splice variant" id="VSP_053845" description="In isoform 5." evidence="6">
    <location>
        <begin position="1"/>
        <end position="183"/>
    </location>
</feature>
<feature type="splice variant" id="VSP_037337" description="In isoform 3." evidence="5">
    <location>
        <begin position="1"/>
        <end position="83"/>
    </location>
</feature>
<feature type="splice variant" id="VSP_053846" description="In isoform 4." evidence="6">
    <original>MACKISPGANSASLPGHPNKVICERVRLQSLFPLLPSDQNTTVQ</original>
    <variation>MQHTCTQQKKVTYKHIARFSPRNRLCQADAVFNNNLAGFQLQSP</variation>
    <location>
        <begin position="1"/>
        <end position="44"/>
    </location>
</feature>
<feature type="splice variant" id="VSP_012243" description="In isoform 2." evidence="7">
    <location>
        <begin position="5"/>
        <end position="54"/>
    </location>
</feature>
<feature type="splice variant" id="VSP_053847" description="In isoform 4." evidence="6">
    <location>
        <begin position="45"/>
        <end position="120"/>
    </location>
</feature>
<feature type="sequence variant" id="VAR_055400" description="In dbSNP:rs183475137." evidence="3">
    <original>A</original>
    <variation>T</variation>
    <location>
        <position position="206"/>
    </location>
</feature>
<feature type="sequence conflict" description="In Ref. 2; CAB66751." evidence="8" ref="2">
    <original>I</original>
    <variation>K</variation>
    <location>
        <position position="308"/>
    </location>
</feature>
<feature type="sequence conflict" description="In Ref. 3; BAG52726." evidence="8" ref="3">
    <original>E</original>
    <variation>G</variation>
    <location>
        <position position="421"/>
    </location>
</feature>
<feature type="helix" evidence="11">
    <location>
        <begin position="441"/>
        <end position="445"/>
    </location>
</feature>
<feature type="strand" evidence="12">
    <location>
        <begin position="448"/>
        <end position="450"/>
    </location>
</feature>
<feature type="strand" evidence="10">
    <location>
        <begin position="453"/>
        <end position="455"/>
    </location>
</feature>
<feature type="strand" evidence="12">
    <location>
        <begin position="457"/>
        <end position="459"/>
    </location>
</feature>
<feature type="turn" evidence="12">
    <location>
        <begin position="464"/>
        <end position="467"/>
    </location>
</feature>
<feature type="strand" evidence="12">
    <location>
        <begin position="475"/>
        <end position="478"/>
    </location>
</feature>
<feature type="turn" evidence="10">
    <location>
        <begin position="480"/>
        <end position="482"/>
    </location>
</feature>
<feature type="strand" evidence="12">
    <location>
        <begin position="484"/>
        <end position="486"/>
    </location>
</feature>
<feature type="helix" evidence="12">
    <location>
        <begin position="487"/>
        <end position="496"/>
    </location>
</feature>
<feature type="turn" evidence="12">
    <location>
        <begin position="501"/>
        <end position="503"/>
    </location>
</feature>
<name>RNF38_HUMAN</name>
<organism>
    <name type="scientific">Homo sapiens</name>
    <name type="common">Human</name>
    <dbReference type="NCBI Taxonomy" id="9606"/>
    <lineage>
        <taxon>Eukaryota</taxon>
        <taxon>Metazoa</taxon>
        <taxon>Chordata</taxon>
        <taxon>Craniata</taxon>
        <taxon>Vertebrata</taxon>
        <taxon>Euteleostomi</taxon>
        <taxon>Mammalia</taxon>
        <taxon>Eutheria</taxon>
        <taxon>Euarchontoglires</taxon>
        <taxon>Primates</taxon>
        <taxon>Haplorrhini</taxon>
        <taxon>Catarrhini</taxon>
        <taxon>Hominidae</taxon>
        <taxon>Homo</taxon>
    </lineage>
</organism>
<keyword id="KW-0002">3D-structure</keyword>
<keyword id="KW-0025">Alternative splicing</keyword>
<keyword id="KW-0479">Metal-binding</keyword>
<keyword id="KW-0539">Nucleus</keyword>
<keyword id="KW-1267">Proteomics identification</keyword>
<keyword id="KW-1185">Reference proteome</keyword>
<keyword id="KW-0808">Transferase</keyword>
<keyword id="KW-0833">Ubl conjugation pathway</keyword>
<keyword id="KW-0862">Zinc</keyword>
<keyword id="KW-0863">Zinc-finger</keyword>
<proteinExistence type="evidence at protein level"/>